<keyword id="KW-0010">Activator</keyword>
<keyword id="KW-0238">DNA-binding</keyword>
<keyword id="KW-0378">Hydrolase</keyword>
<keyword id="KW-0426">Late protein</keyword>
<keyword id="KW-1185">Reference proteome</keyword>
<keyword id="KW-0804">Transcription</keyword>
<keyword id="KW-0805">Transcription regulation</keyword>
<keyword id="KW-0946">Virion</keyword>
<name>ETF1_MONPV</name>
<sequence length="637" mass="73871">MNTGIIDLFDNHVDSIPTILPHQLATLDYLVRTIIDENRSVLLFHIMGSGKTIIALLFALVASRFKKVYILVPNINILKIFNYNMGVAMNLFNDEFIAENIFIHSTTSFYSLNYNDNVINYNGLSRYNNSIFIVDEAHNIFGNNTGELMTVIKNKNKIPFLLLSGSPITNTPNTLGHIIDLMSEETIDFGEIISRGKKVIQTLLNERGVNVLKDLLKGRISYYEMPDKDLPTIRYHGRKFLDTRVVYCHMSKLQEKDYMITRRQLCYHEMFDKNMYNVSMAVLGQLNLMNNLDTLFQEQDKELYPNLKINNGVLYGEELVTLNISSKFKYFINRIQTLKGKHFIYFSNSTYGGLVIKYIMLSNGYSEYNGSQGTNPHMINGKPKTFAIVTSKMKSSLEDLLDVYNSPENDDGNQLMFLFSSNIMSESYTLKEVRHIWFMTIPDTFSQYNQILGRSIRKFSYVDISEPVNVYLLAAVYSDFNDEVTSLNDYTQDELINVLPFDIKKLLYLKFKTKETNRIYSILQEMSETYSLPPHPSIVKVLLGELVRQFFYNNSRIKYNDSKLLKMVTSVIKNKEDARNYIDDIVNGHFFVSNKVFDKSLLYKYKNDIITVPFRLSYEPFVWGVNFRKEYNVVSSP</sequence>
<feature type="chain" id="PRO_0000457420" description="Early transcription factor 70 kDa subunit">
    <location>
        <begin position="1"/>
        <end position="637"/>
    </location>
</feature>
<proteinExistence type="inferred from homology"/>
<evidence type="ECO:0000250" key="1">
    <source>
        <dbReference type="UniProtKB" id="P04195"/>
    </source>
</evidence>
<evidence type="ECO:0000250" key="2">
    <source>
        <dbReference type="UniProtKB" id="P04308"/>
    </source>
</evidence>
<evidence type="ECO:0000305" key="3"/>
<accession>A0A7H0DN90</accession>
<reference key="1">
    <citation type="journal article" date="2022" name="J. Infect. Dis.">
        <title>Exportation of Monkeypox virus from the African continent.</title>
        <authorList>
            <person name="Mauldin M.R."/>
            <person name="McCollum A.M."/>
            <person name="Nakazawa Y.J."/>
            <person name="Mandra A."/>
            <person name="Whitehouse E.R."/>
            <person name="Davidson W."/>
            <person name="Zhao H."/>
            <person name="Gao J."/>
            <person name="Li Y."/>
            <person name="Doty J."/>
            <person name="Yinka-Ogunleye A."/>
            <person name="Akinpelu A."/>
            <person name="Aruna O."/>
            <person name="Naidoo D."/>
            <person name="Lewandowski K."/>
            <person name="Afrough B."/>
            <person name="Graham V."/>
            <person name="Aarons E."/>
            <person name="Hewson R."/>
            <person name="Vipond R."/>
            <person name="Dunning J."/>
            <person name="Chand M."/>
            <person name="Brown C."/>
            <person name="Cohen-Gihon I."/>
            <person name="Erez N."/>
            <person name="Shifman O."/>
            <person name="Israeli O."/>
            <person name="Sharon M."/>
            <person name="Schwartz E."/>
            <person name="Beth-Din A."/>
            <person name="Zvi A."/>
            <person name="Mak T.M."/>
            <person name="Ng Y.K."/>
            <person name="Cui L."/>
            <person name="Lin R.T.P."/>
            <person name="Olson V.A."/>
            <person name="Brooks T."/>
            <person name="Paran N."/>
            <person name="Ihekweazu C."/>
            <person name="Reynolds M.G."/>
        </authorList>
    </citation>
    <scope>NUCLEOTIDE SEQUENCE [LARGE SCALE GENOMIC DNA]</scope>
    <source>
        <strain>MPXV-M5312_HM12_Rivers</strain>
    </source>
</reference>
<comment type="function">
    <text evidence="2">Acts with RNA polymerase to initiate transcription from early gene promoters. Is recruited by the RPO-associated protein of 94 kDa RAP94/OPG109 to form the early transcription complex, which also contains the core RNA polymerase. ETF heterodimer binds to early gene promoters.</text>
</comment>
<comment type="subunit">
    <text evidence="2">Heterodimer of a 70 kDa and a 82 kDa subunit. Part of the early transcription complex composed of ETF, RAP94/OPG109, and the DNA-directed RNA polymerase.</text>
</comment>
<comment type="subcellular location">
    <subcellularLocation>
        <location evidence="2">Virion</location>
    </subcellularLocation>
    <text evidence="2">All the enzymes and other proteins required to synthesize early mRNAs are packaged within the virion core along with the DNA genome. This is necessary because viral early mRNAs are synthesized within minutes after virus entry into the cell and are extruded through pores in the core particle.</text>
</comment>
<comment type="PTM">
    <text evidence="1">Apparently non-glycosylated.</text>
</comment>
<comment type="similarity">
    <text evidence="3">Belongs to the helicase family. VETF subfamily.</text>
</comment>
<protein>
    <recommendedName>
        <fullName>Early transcription factor 70 kDa subunit</fullName>
        <ecNumber>3.6.4.-</ecNumber>
    </recommendedName>
    <alternativeName>
        <fullName>ATP-dependent helicase VETFS</fullName>
    </alternativeName>
    <alternativeName>
        <fullName>ETF small subunit</fullName>
    </alternativeName>
    <alternativeName>
        <fullName>VETF D6 subunit</fullName>
    </alternativeName>
    <alternativeName>
        <fullName>Vaccinia virus early transcription factor small subunit</fullName>
        <shortName>VETF small subunit</shortName>
    </alternativeName>
</protein>
<organism>
    <name type="scientific">Monkeypox virus</name>
    <dbReference type="NCBI Taxonomy" id="10244"/>
    <lineage>
        <taxon>Viruses</taxon>
        <taxon>Varidnaviria</taxon>
        <taxon>Bamfordvirae</taxon>
        <taxon>Nucleocytoviricota</taxon>
        <taxon>Pokkesviricetes</taxon>
        <taxon>Chitovirales</taxon>
        <taxon>Poxviridae</taxon>
        <taxon>Chordopoxvirinae</taxon>
        <taxon>Orthopoxvirus</taxon>
    </lineage>
</organism>
<gene>
    <name type="primary">OPG118</name>
    <name type="synonym">VETFS</name>
    <name type="ORF">MPXVgp103</name>
</gene>
<organismHost>
    <name type="scientific">Cynomys gunnisoni</name>
    <name type="common">Gunnison's prairie dog</name>
    <name type="synonym">Spermophilus gunnisoni</name>
    <dbReference type="NCBI Taxonomy" id="45479"/>
</organismHost>
<organismHost>
    <name type="scientific">Cynomys leucurus</name>
    <name type="common">White-tailed prairie dog</name>
    <dbReference type="NCBI Taxonomy" id="99825"/>
</organismHost>
<organismHost>
    <name type="scientific">Cynomys ludovicianus</name>
    <name type="common">Black-tailed prairie dog</name>
    <dbReference type="NCBI Taxonomy" id="45480"/>
</organismHost>
<organismHost>
    <name type="scientific">Cynomys mexicanus</name>
    <name type="common">Mexican prairie dog</name>
    <dbReference type="NCBI Taxonomy" id="99826"/>
</organismHost>
<organismHost>
    <name type="scientific">Cynomys parvidens</name>
    <name type="common">Utah prairie dog</name>
    <dbReference type="NCBI Taxonomy" id="99827"/>
</organismHost>
<organismHost>
    <name type="scientific">Gliridae</name>
    <name type="common">dormice</name>
    <dbReference type="NCBI Taxonomy" id="30650"/>
</organismHost>
<organismHost>
    <name type="scientific">Heliosciurus ruwenzorii</name>
    <name type="common">Ruwenzori sun squirrel</name>
    <dbReference type="NCBI Taxonomy" id="226685"/>
</organismHost>
<organismHost>
    <name type="scientific">Homo sapiens</name>
    <name type="common">Human</name>
    <dbReference type="NCBI Taxonomy" id="9606"/>
</organismHost>
<organismHost>
    <name type="scientific">Mus musculus</name>
    <name type="common">Mouse</name>
    <dbReference type="NCBI Taxonomy" id="10090"/>
</organismHost>
<dbReference type="EC" id="3.6.4.-"/>
<dbReference type="EMBL" id="MT903340">
    <property type="protein sequence ID" value="QNP12973.1"/>
    <property type="molecule type" value="Genomic_DNA"/>
</dbReference>
<dbReference type="RefSeq" id="YP_010377100.1">
    <property type="nucleotide sequence ID" value="NC_063383.1"/>
</dbReference>
<dbReference type="SMR" id="A0A7H0DN90"/>
<dbReference type="GeneID" id="72551513"/>
<dbReference type="Proteomes" id="UP000516359">
    <property type="component" value="Genome"/>
</dbReference>
<dbReference type="GO" id="GO:0044423">
    <property type="term" value="C:virion component"/>
    <property type="evidence" value="ECO:0007669"/>
    <property type="project" value="UniProtKB-KW"/>
</dbReference>
<dbReference type="GO" id="GO:0005524">
    <property type="term" value="F:ATP binding"/>
    <property type="evidence" value="ECO:0007669"/>
    <property type="project" value="InterPro"/>
</dbReference>
<dbReference type="GO" id="GO:0003677">
    <property type="term" value="F:DNA binding"/>
    <property type="evidence" value="ECO:0007669"/>
    <property type="project" value="UniProtKB-KW"/>
</dbReference>
<dbReference type="GO" id="GO:0016787">
    <property type="term" value="F:hydrolase activity"/>
    <property type="evidence" value="ECO:0007669"/>
    <property type="project" value="UniProtKB-KW"/>
</dbReference>
<dbReference type="CDD" id="cd18785">
    <property type="entry name" value="SF2_C"/>
    <property type="match status" value="1"/>
</dbReference>
<dbReference type="FunFam" id="3.40.50.300:FF:001785">
    <property type="entry name" value="Early gene transcription factor VETF small subunit"/>
    <property type="match status" value="1"/>
</dbReference>
<dbReference type="Gene3D" id="3.40.50.300">
    <property type="entry name" value="P-loop containing nucleotide triphosphate hydrolases"/>
    <property type="match status" value="2"/>
</dbReference>
<dbReference type="InterPro" id="IPR002464">
    <property type="entry name" value="DNA/RNA_helicase_DEAH_CS"/>
</dbReference>
<dbReference type="InterPro" id="IPR006935">
    <property type="entry name" value="Helicase/UvrB_N"/>
</dbReference>
<dbReference type="InterPro" id="IPR014001">
    <property type="entry name" value="Helicase_ATP-bd"/>
</dbReference>
<dbReference type="InterPro" id="IPR001650">
    <property type="entry name" value="Helicase_C-like"/>
</dbReference>
<dbReference type="InterPro" id="IPR027417">
    <property type="entry name" value="P-loop_NTPase"/>
</dbReference>
<dbReference type="Pfam" id="PF00271">
    <property type="entry name" value="Helicase_C"/>
    <property type="match status" value="1"/>
</dbReference>
<dbReference type="Pfam" id="PF04851">
    <property type="entry name" value="ResIII"/>
    <property type="match status" value="1"/>
</dbReference>
<dbReference type="SMART" id="SM00487">
    <property type="entry name" value="DEXDc"/>
    <property type="match status" value="1"/>
</dbReference>
<dbReference type="SMART" id="SM00490">
    <property type="entry name" value="HELICc"/>
    <property type="match status" value="1"/>
</dbReference>
<dbReference type="SUPFAM" id="SSF52540">
    <property type="entry name" value="P-loop containing nucleoside triphosphate hydrolases"/>
    <property type="match status" value="1"/>
</dbReference>
<dbReference type="PROSITE" id="PS00690">
    <property type="entry name" value="DEAH_ATP_HELICASE"/>
    <property type="match status" value="1"/>
</dbReference>
<dbReference type="PROSITE" id="PS51192">
    <property type="entry name" value="HELICASE_ATP_BIND_1"/>
    <property type="match status" value="1"/>
</dbReference>
<dbReference type="PROSITE" id="PS51194">
    <property type="entry name" value="HELICASE_CTER"/>
    <property type="match status" value="1"/>
</dbReference>